<dbReference type="EMBL" id="CP000720">
    <property type="protein sequence ID" value="ABS47840.1"/>
    <property type="molecule type" value="Genomic_DNA"/>
</dbReference>
<dbReference type="RefSeq" id="WP_002210178.1">
    <property type="nucleotide sequence ID" value="NC_009708.1"/>
</dbReference>
<dbReference type="SMR" id="A7FMT8"/>
<dbReference type="GeneID" id="57975202"/>
<dbReference type="KEGG" id="ypi:YpsIP31758_3612"/>
<dbReference type="HOGENOM" id="CLU_061463_3_3_6"/>
<dbReference type="Proteomes" id="UP000002412">
    <property type="component" value="Chromosome"/>
</dbReference>
<dbReference type="GO" id="GO:0005737">
    <property type="term" value="C:cytoplasm"/>
    <property type="evidence" value="ECO:0007669"/>
    <property type="project" value="UniProtKB-ARBA"/>
</dbReference>
<dbReference type="GO" id="GO:1990904">
    <property type="term" value="C:ribonucleoprotein complex"/>
    <property type="evidence" value="ECO:0007669"/>
    <property type="project" value="UniProtKB-KW"/>
</dbReference>
<dbReference type="GO" id="GO:0005840">
    <property type="term" value="C:ribosome"/>
    <property type="evidence" value="ECO:0007669"/>
    <property type="project" value="UniProtKB-KW"/>
</dbReference>
<dbReference type="GO" id="GO:0019843">
    <property type="term" value="F:rRNA binding"/>
    <property type="evidence" value="ECO:0007669"/>
    <property type="project" value="UniProtKB-UniRule"/>
</dbReference>
<dbReference type="GO" id="GO:0003735">
    <property type="term" value="F:structural constituent of ribosome"/>
    <property type="evidence" value="ECO:0007669"/>
    <property type="project" value="InterPro"/>
</dbReference>
<dbReference type="GO" id="GO:0006412">
    <property type="term" value="P:translation"/>
    <property type="evidence" value="ECO:0007669"/>
    <property type="project" value="UniProtKB-UniRule"/>
</dbReference>
<dbReference type="HAMAP" id="MF_01363">
    <property type="entry name" value="Ribosomal_bL21"/>
    <property type="match status" value="1"/>
</dbReference>
<dbReference type="InterPro" id="IPR028909">
    <property type="entry name" value="bL21-like"/>
</dbReference>
<dbReference type="InterPro" id="IPR036164">
    <property type="entry name" value="bL21-like_sf"/>
</dbReference>
<dbReference type="InterPro" id="IPR001787">
    <property type="entry name" value="Ribosomal_bL21"/>
</dbReference>
<dbReference type="InterPro" id="IPR018258">
    <property type="entry name" value="Ribosomal_bL21_CS"/>
</dbReference>
<dbReference type="NCBIfam" id="TIGR00061">
    <property type="entry name" value="L21"/>
    <property type="match status" value="1"/>
</dbReference>
<dbReference type="PANTHER" id="PTHR21349">
    <property type="entry name" value="50S RIBOSOMAL PROTEIN L21"/>
    <property type="match status" value="1"/>
</dbReference>
<dbReference type="PANTHER" id="PTHR21349:SF0">
    <property type="entry name" value="LARGE RIBOSOMAL SUBUNIT PROTEIN BL21M"/>
    <property type="match status" value="1"/>
</dbReference>
<dbReference type="Pfam" id="PF00829">
    <property type="entry name" value="Ribosomal_L21p"/>
    <property type="match status" value="1"/>
</dbReference>
<dbReference type="SUPFAM" id="SSF141091">
    <property type="entry name" value="L21p-like"/>
    <property type="match status" value="1"/>
</dbReference>
<dbReference type="PROSITE" id="PS01169">
    <property type="entry name" value="RIBOSOMAL_L21"/>
    <property type="match status" value="1"/>
</dbReference>
<comment type="function">
    <text evidence="1">This protein binds to 23S rRNA in the presence of protein L20.</text>
</comment>
<comment type="subunit">
    <text evidence="1">Part of the 50S ribosomal subunit. Contacts protein L20.</text>
</comment>
<comment type="similarity">
    <text evidence="1">Belongs to the bacterial ribosomal protein bL21 family.</text>
</comment>
<feature type="chain" id="PRO_1000067917" description="Large ribosomal subunit protein bL21">
    <location>
        <begin position="1"/>
        <end position="103"/>
    </location>
</feature>
<organism>
    <name type="scientific">Yersinia pseudotuberculosis serotype O:1b (strain IP 31758)</name>
    <dbReference type="NCBI Taxonomy" id="349747"/>
    <lineage>
        <taxon>Bacteria</taxon>
        <taxon>Pseudomonadati</taxon>
        <taxon>Pseudomonadota</taxon>
        <taxon>Gammaproteobacteria</taxon>
        <taxon>Enterobacterales</taxon>
        <taxon>Yersiniaceae</taxon>
        <taxon>Yersinia</taxon>
    </lineage>
</organism>
<protein>
    <recommendedName>
        <fullName evidence="1">Large ribosomal subunit protein bL21</fullName>
    </recommendedName>
    <alternativeName>
        <fullName evidence="2">50S ribosomal protein L21</fullName>
    </alternativeName>
</protein>
<sequence>MYAVFQSGGKQHRVSEGQTIRLEKLDIATGETIEFDQVLMIANGEEINIGAPLVDGGKIKAEIIAHGRGEKIKIVKFRRRKHYRKQQGHRQWFTDVKITGISA</sequence>
<keyword id="KW-0687">Ribonucleoprotein</keyword>
<keyword id="KW-0689">Ribosomal protein</keyword>
<keyword id="KW-0694">RNA-binding</keyword>
<keyword id="KW-0699">rRNA-binding</keyword>
<proteinExistence type="inferred from homology"/>
<reference key="1">
    <citation type="journal article" date="2007" name="PLoS Genet.">
        <title>The complete genome sequence of Yersinia pseudotuberculosis IP31758, the causative agent of Far East scarlet-like fever.</title>
        <authorList>
            <person name="Eppinger M."/>
            <person name="Rosovitz M.J."/>
            <person name="Fricke W.F."/>
            <person name="Rasko D.A."/>
            <person name="Kokorina G."/>
            <person name="Fayolle C."/>
            <person name="Lindler L.E."/>
            <person name="Carniel E."/>
            <person name="Ravel J."/>
        </authorList>
    </citation>
    <scope>NUCLEOTIDE SEQUENCE [LARGE SCALE GENOMIC DNA]</scope>
    <source>
        <strain>IP 31758</strain>
    </source>
</reference>
<name>RL21_YERP3</name>
<gene>
    <name evidence="1" type="primary">rplU</name>
    <name type="ordered locus">YpsIP31758_3612</name>
</gene>
<evidence type="ECO:0000255" key="1">
    <source>
        <dbReference type="HAMAP-Rule" id="MF_01363"/>
    </source>
</evidence>
<evidence type="ECO:0000305" key="2"/>
<accession>A7FMT8</accession>